<comment type="function">
    <text evidence="1">An essential GTPase that binds both GDP and GTP, with rapid nucleotide exchange. Plays a role in 16S rRNA processing and 30S ribosomal subunit biogenesis and possibly also in cell cycle regulation and energy metabolism.</text>
</comment>
<comment type="subunit">
    <text evidence="1">Monomer.</text>
</comment>
<comment type="subcellular location">
    <subcellularLocation>
        <location>Cytoplasm</location>
    </subcellularLocation>
    <subcellularLocation>
        <location evidence="1">Cell inner membrane</location>
        <topology evidence="1">Peripheral membrane protein</topology>
    </subcellularLocation>
</comment>
<comment type="similarity">
    <text evidence="1 2">Belongs to the TRAFAC class TrmE-Era-EngA-EngB-Septin-like GTPase superfamily. Era GTPase family.</text>
</comment>
<proteinExistence type="inferred from homology"/>
<keyword id="KW-0997">Cell inner membrane</keyword>
<keyword id="KW-1003">Cell membrane</keyword>
<keyword id="KW-0963">Cytoplasm</keyword>
<keyword id="KW-0342">GTP-binding</keyword>
<keyword id="KW-0472">Membrane</keyword>
<keyword id="KW-0547">Nucleotide-binding</keyword>
<keyword id="KW-0690">Ribosome biogenesis</keyword>
<keyword id="KW-0694">RNA-binding</keyword>
<keyword id="KW-0699">rRNA-binding</keyword>
<feature type="chain" id="PRO_1000079695" description="GTPase Era">
    <location>
        <begin position="1"/>
        <end position="296"/>
    </location>
</feature>
<feature type="domain" description="Era-type G" evidence="2">
    <location>
        <begin position="7"/>
        <end position="174"/>
    </location>
</feature>
<feature type="domain" description="KH type-2" evidence="1">
    <location>
        <begin position="205"/>
        <end position="282"/>
    </location>
</feature>
<feature type="region of interest" description="G1" evidence="2">
    <location>
        <begin position="15"/>
        <end position="22"/>
    </location>
</feature>
<feature type="region of interest" description="G2" evidence="2">
    <location>
        <begin position="41"/>
        <end position="45"/>
    </location>
</feature>
<feature type="region of interest" description="G3" evidence="2">
    <location>
        <begin position="62"/>
        <end position="65"/>
    </location>
</feature>
<feature type="region of interest" description="G4" evidence="2">
    <location>
        <begin position="124"/>
        <end position="127"/>
    </location>
</feature>
<feature type="region of interest" description="G5" evidence="2">
    <location>
        <begin position="153"/>
        <end position="155"/>
    </location>
</feature>
<feature type="binding site" evidence="1">
    <location>
        <begin position="15"/>
        <end position="22"/>
    </location>
    <ligand>
        <name>GTP</name>
        <dbReference type="ChEBI" id="CHEBI:37565"/>
    </ligand>
</feature>
<feature type="binding site" evidence="1">
    <location>
        <begin position="62"/>
        <end position="66"/>
    </location>
    <ligand>
        <name>GTP</name>
        <dbReference type="ChEBI" id="CHEBI:37565"/>
    </ligand>
</feature>
<feature type="binding site" evidence="1">
    <location>
        <begin position="124"/>
        <end position="127"/>
    </location>
    <ligand>
        <name>GTP</name>
        <dbReference type="ChEBI" id="CHEBI:37565"/>
    </ligand>
</feature>
<accession>Q5HAY9</accession>
<accession>Q5FEP2</accession>
<name>ERA_EHRRW</name>
<gene>
    <name evidence="1" type="primary">era</name>
    <name type="ordered locus">Erum5420</name>
    <name type="ordered locus">ERWE_CDS_05680</name>
</gene>
<dbReference type="EMBL" id="CR767821">
    <property type="protein sequence ID" value="CAH58271.1"/>
    <property type="molecule type" value="Genomic_DNA"/>
</dbReference>
<dbReference type="EMBL" id="CR925678">
    <property type="protein sequence ID" value="CAI27062.1"/>
    <property type="molecule type" value="Genomic_DNA"/>
</dbReference>
<dbReference type="RefSeq" id="WP_011155222.1">
    <property type="nucleotide sequence ID" value="NC_005295.2"/>
</dbReference>
<dbReference type="SMR" id="Q5HAY9"/>
<dbReference type="GeneID" id="33057755"/>
<dbReference type="KEGG" id="eru:Erum5420"/>
<dbReference type="KEGG" id="erw:ERWE_CDS_05680"/>
<dbReference type="eggNOG" id="COG1159">
    <property type="taxonomic scope" value="Bacteria"/>
</dbReference>
<dbReference type="HOGENOM" id="CLU_038009_1_1_5"/>
<dbReference type="Proteomes" id="UP000001021">
    <property type="component" value="Chromosome"/>
</dbReference>
<dbReference type="GO" id="GO:0005737">
    <property type="term" value="C:cytoplasm"/>
    <property type="evidence" value="ECO:0007669"/>
    <property type="project" value="UniProtKB-SubCell"/>
</dbReference>
<dbReference type="GO" id="GO:0005886">
    <property type="term" value="C:plasma membrane"/>
    <property type="evidence" value="ECO:0007669"/>
    <property type="project" value="UniProtKB-SubCell"/>
</dbReference>
<dbReference type="GO" id="GO:0005525">
    <property type="term" value="F:GTP binding"/>
    <property type="evidence" value="ECO:0007669"/>
    <property type="project" value="UniProtKB-UniRule"/>
</dbReference>
<dbReference type="GO" id="GO:0003924">
    <property type="term" value="F:GTPase activity"/>
    <property type="evidence" value="ECO:0007669"/>
    <property type="project" value="UniProtKB-UniRule"/>
</dbReference>
<dbReference type="GO" id="GO:0043024">
    <property type="term" value="F:ribosomal small subunit binding"/>
    <property type="evidence" value="ECO:0007669"/>
    <property type="project" value="TreeGrafter"/>
</dbReference>
<dbReference type="GO" id="GO:0070181">
    <property type="term" value="F:small ribosomal subunit rRNA binding"/>
    <property type="evidence" value="ECO:0007669"/>
    <property type="project" value="UniProtKB-UniRule"/>
</dbReference>
<dbReference type="GO" id="GO:0000028">
    <property type="term" value="P:ribosomal small subunit assembly"/>
    <property type="evidence" value="ECO:0007669"/>
    <property type="project" value="TreeGrafter"/>
</dbReference>
<dbReference type="CDD" id="cd04163">
    <property type="entry name" value="Era"/>
    <property type="match status" value="1"/>
</dbReference>
<dbReference type="CDD" id="cd22534">
    <property type="entry name" value="KH-II_Era"/>
    <property type="match status" value="1"/>
</dbReference>
<dbReference type="Gene3D" id="3.30.300.20">
    <property type="match status" value="1"/>
</dbReference>
<dbReference type="Gene3D" id="3.40.50.300">
    <property type="entry name" value="P-loop containing nucleotide triphosphate hydrolases"/>
    <property type="match status" value="1"/>
</dbReference>
<dbReference type="HAMAP" id="MF_00367">
    <property type="entry name" value="GTPase_Era"/>
    <property type="match status" value="1"/>
</dbReference>
<dbReference type="InterPro" id="IPR030388">
    <property type="entry name" value="G_ERA_dom"/>
</dbReference>
<dbReference type="InterPro" id="IPR006073">
    <property type="entry name" value="GTP-bd"/>
</dbReference>
<dbReference type="InterPro" id="IPR005662">
    <property type="entry name" value="GTPase_Era-like"/>
</dbReference>
<dbReference type="InterPro" id="IPR015946">
    <property type="entry name" value="KH_dom-like_a/b"/>
</dbReference>
<dbReference type="InterPro" id="IPR004044">
    <property type="entry name" value="KH_dom_type_2"/>
</dbReference>
<dbReference type="InterPro" id="IPR027417">
    <property type="entry name" value="P-loop_NTPase"/>
</dbReference>
<dbReference type="InterPro" id="IPR005225">
    <property type="entry name" value="Small_GTP-bd"/>
</dbReference>
<dbReference type="NCBIfam" id="TIGR00436">
    <property type="entry name" value="era"/>
    <property type="match status" value="1"/>
</dbReference>
<dbReference type="NCBIfam" id="NF000908">
    <property type="entry name" value="PRK00089.1"/>
    <property type="match status" value="1"/>
</dbReference>
<dbReference type="NCBIfam" id="TIGR00231">
    <property type="entry name" value="small_GTP"/>
    <property type="match status" value="1"/>
</dbReference>
<dbReference type="PANTHER" id="PTHR42698">
    <property type="entry name" value="GTPASE ERA"/>
    <property type="match status" value="1"/>
</dbReference>
<dbReference type="PANTHER" id="PTHR42698:SF1">
    <property type="entry name" value="GTPASE ERA, MITOCHONDRIAL"/>
    <property type="match status" value="1"/>
</dbReference>
<dbReference type="Pfam" id="PF07650">
    <property type="entry name" value="KH_2"/>
    <property type="match status" value="1"/>
</dbReference>
<dbReference type="Pfam" id="PF01926">
    <property type="entry name" value="MMR_HSR1"/>
    <property type="match status" value="1"/>
</dbReference>
<dbReference type="SUPFAM" id="SSF52540">
    <property type="entry name" value="P-loop containing nucleoside triphosphate hydrolases"/>
    <property type="match status" value="1"/>
</dbReference>
<dbReference type="PROSITE" id="PS51713">
    <property type="entry name" value="G_ERA"/>
    <property type="match status" value="1"/>
</dbReference>
<dbReference type="PROSITE" id="PS50823">
    <property type="entry name" value="KH_TYPE_2"/>
    <property type="match status" value="1"/>
</dbReference>
<evidence type="ECO:0000255" key="1">
    <source>
        <dbReference type="HAMAP-Rule" id="MF_00367"/>
    </source>
</evidence>
<evidence type="ECO:0000255" key="2">
    <source>
        <dbReference type="PROSITE-ProRule" id="PRU01050"/>
    </source>
</evidence>
<organism>
    <name type="scientific">Ehrlichia ruminantium (strain Welgevonden)</name>
    <dbReference type="NCBI Taxonomy" id="254945"/>
    <lineage>
        <taxon>Bacteria</taxon>
        <taxon>Pseudomonadati</taxon>
        <taxon>Pseudomonadota</taxon>
        <taxon>Alphaproteobacteria</taxon>
        <taxon>Rickettsiales</taxon>
        <taxon>Anaplasmataceae</taxon>
        <taxon>Ehrlichia</taxon>
    </lineage>
</organism>
<protein>
    <recommendedName>
        <fullName evidence="1">GTPase Era</fullName>
    </recommendedName>
</protein>
<sequence length="296" mass="33707">MNHVGRKCSMSAIVGATNAGKSTLVNVLVGQKVAAVTPKVQTTRVRMHAVSNHENVQLIFIDTPGIFSPKTKLEKFLVKHAWMSLKGIENVIVLVDVKNYLNQHLKKIIDRIKHSNLNAILVLNKIDIVHQSIVSEVIEYMYSLYKFSKAFTISALYGIGIDKLVDYLCETSPYGPWLYNDDQISDAPLKFFMAEITREKLFITLRHELPYSLSVVTELVEEKEDNSLIIKQVIYVTKGSHKTIILGKKGEMVKKISMESKSDLENILQVKVHLFLFVKVREFWQNHLNECVGYAE</sequence>
<reference key="1">
    <citation type="journal article" date="2005" name="Proc. Natl. Acad. Sci. U.S.A.">
        <title>The genome of the heartwater agent Ehrlichia ruminantium contains multiple tandem repeats of actively variable copy number.</title>
        <authorList>
            <person name="Collins N.E."/>
            <person name="Liebenberg J."/>
            <person name="de Villiers E.P."/>
            <person name="Brayton K.A."/>
            <person name="Louw E."/>
            <person name="Pretorius A."/>
            <person name="Faber F.E."/>
            <person name="van Heerden H."/>
            <person name="Josemans A."/>
            <person name="van Kleef M."/>
            <person name="Steyn H.C."/>
            <person name="van Strijp M.F."/>
            <person name="Zweygarth E."/>
            <person name="Jongejan F."/>
            <person name="Maillard J.C."/>
            <person name="Berthier D."/>
            <person name="Botha M."/>
            <person name="Joubert F."/>
            <person name="Corton C.H."/>
            <person name="Thomson N.R."/>
            <person name="Allsopp M.T."/>
            <person name="Allsopp B.A."/>
        </authorList>
    </citation>
    <scope>NUCLEOTIDE SEQUENCE [LARGE SCALE GENOMIC DNA]</scope>
    <source>
        <strain>Welgevonden</strain>
    </source>
</reference>
<reference key="2">
    <citation type="journal article" date="2006" name="J. Bacteriol.">
        <title>Comparative genomic analysis of three strains of Ehrlichia ruminantium reveals an active process of genome size plasticity.</title>
        <authorList>
            <person name="Frutos R."/>
            <person name="Viari A."/>
            <person name="Ferraz C."/>
            <person name="Morgat A."/>
            <person name="Eychenie S."/>
            <person name="Kandassamy Y."/>
            <person name="Chantal I."/>
            <person name="Bensaid A."/>
            <person name="Coissac E."/>
            <person name="Vachiery N."/>
            <person name="Demaille J."/>
            <person name="Martinez D."/>
        </authorList>
    </citation>
    <scope>NUCLEOTIDE SEQUENCE [LARGE SCALE GENOMIC DNA]</scope>
    <source>
        <strain>Welgevonden</strain>
    </source>
</reference>